<gene>
    <name evidence="1" type="primary">dnaG</name>
    <name type="ordered locus">bbp_053</name>
</gene>
<accession>Q89B09</accession>
<organism>
    <name type="scientific">Buchnera aphidicola subsp. Baizongia pistaciae (strain Bp)</name>
    <dbReference type="NCBI Taxonomy" id="224915"/>
    <lineage>
        <taxon>Bacteria</taxon>
        <taxon>Pseudomonadati</taxon>
        <taxon>Pseudomonadota</taxon>
        <taxon>Gammaproteobacteria</taxon>
        <taxon>Enterobacterales</taxon>
        <taxon>Erwiniaceae</taxon>
        <taxon>Buchnera</taxon>
    </lineage>
</organism>
<dbReference type="EC" id="2.7.7.101" evidence="1"/>
<dbReference type="EMBL" id="AE016826">
    <property type="protein sequence ID" value="AAO26792.1"/>
    <property type="molecule type" value="Genomic_DNA"/>
</dbReference>
<dbReference type="RefSeq" id="WP_011091193.1">
    <property type="nucleotide sequence ID" value="NC_004545.1"/>
</dbReference>
<dbReference type="SMR" id="Q89B09"/>
<dbReference type="STRING" id="224915.bbp_053"/>
<dbReference type="KEGG" id="bab:bbp_053"/>
<dbReference type="eggNOG" id="COG0358">
    <property type="taxonomic scope" value="Bacteria"/>
</dbReference>
<dbReference type="HOGENOM" id="CLU_013501_5_1_6"/>
<dbReference type="OrthoDB" id="9803773at2"/>
<dbReference type="Proteomes" id="UP000000601">
    <property type="component" value="Chromosome"/>
</dbReference>
<dbReference type="GO" id="GO:0005737">
    <property type="term" value="C:cytoplasm"/>
    <property type="evidence" value="ECO:0007669"/>
    <property type="project" value="TreeGrafter"/>
</dbReference>
<dbReference type="GO" id="GO:0000428">
    <property type="term" value="C:DNA-directed RNA polymerase complex"/>
    <property type="evidence" value="ECO:0007669"/>
    <property type="project" value="UniProtKB-KW"/>
</dbReference>
<dbReference type="GO" id="GO:1990077">
    <property type="term" value="C:primosome complex"/>
    <property type="evidence" value="ECO:0007669"/>
    <property type="project" value="UniProtKB-KW"/>
</dbReference>
<dbReference type="GO" id="GO:0003677">
    <property type="term" value="F:DNA binding"/>
    <property type="evidence" value="ECO:0007669"/>
    <property type="project" value="UniProtKB-KW"/>
</dbReference>
<dbReference type="GO" id="GO:0003899">
    <property type="term" value="F:DNA-directed RNA polymerase activity"/>
    <property type="evidence" value="ECO:0007669"/>
    <property type="project" value="InterPro"/>
</dbReference>
<dbReference type="GO" id="GO:0008270">
    <property type="term" value="F:zinc ion binding"/>
    <property type="evidence" value="ECO:0007669"/>
    <property type="project" value="UniProtKB-UniRule"/>
</dbReference>
<dbReference type="GO" id="GO:0006269">
    <property type="term" value="P:DNA replication, synthesis of primer"/>
    <property type="evidence" value="ECO:0007669"/>
    <property type="project" value="UniProtKB-UniRule"/>
</dbReference>
<dbReference type="CDD" id="cd03364">
    <property type="entry name" value="TOPRIM_DnaG_primases"/>
    <property type="match status" value="1"/>
</dbReference>
<dbReference type="FunFam" id="3.40.1360.10:FF:000002">
    <property type="entry name" value="DNA primase"/>
    <property type="match status" value="1"/>
</dbReference>
<dbReference type="FunFam" id="3.90.580.10:FF:000001">
    <property type="entry name" value="DNA primase"/>
    <property type="match status" value="1"/>
</dbReference>
<dbReference type="Gene3D" id="3.40.1360.10">
    <property type="match status" value="1"/>
</dbReference>
<dbReference type="Gene3D" id="3.90.980.10">
    <property type="entry name" value="DNA primase, catalytic core, N-terminal domain"/>
    <property type="match status" value="1"/>
</dbReference>
<dbReference type="Gene3D" id="1.10.860.10">
    <property type="entry name" value="DNAb Helicase, Chain A"/>
    <property type="match status" value="1"/>
</dbReference>
<dbReference type="Gene3D" id="1.20.50.20">
    <property type="entry name" value="DnaG, RNA polymerase domain, helical bundle"/>
    <property type="match status" value="1"/>
</dbReference>
<dbReference type="Gene3D" id="3.90.580.10">
    <property type="entry name" value="Zinc finger, CHC2-type domain"/>
    <property type="match status" value="1"/>
</dbReference>
<dbReference type="HAMAP" id="MF_00974">
    <property type="entry name" value="DNA_primase_DnaG"/>
    <property type="match status" value="1"/>
</dbReference>
<dbReference type="InterPro" id="IPR016136">
    <property type="entry name" value="DNA_helicase_N/primase_C"/>
</dbReference>
<dbReference type="InterPro" id="IPR037068">
    <property type="entry name" value="DNA_primase_core_N_sf"/>
</dbReference>
<dbReference type="InterPro" id="IPR019475">
    <property type="entry name" value="DNA_primase_DnaB-bd"/>
</dbReference>
<dbReference type="InterPro" id="IPR006295">
    <property type="entry name" value="DNA_primase_DnaG"/>
</dbReference>
<dbReference type="InterPro" id="IPR013173">
    <property type="entry name" value="DNA_primase_DnaG_DnaB-bd_dom"/>
</dbReference>
<dbReference type="InterPro" id="IPR036977">
    <property type="entry name" value="DNA_primase_Znf_CHC2"/>
</dbReference>
<dbReference type="InterPro" id="IPR030846">
    <property type="entry name" value="DnaG_bac"/>
</dbReference>
<dbReference type="InterPro" id="IPR013264">
    <property type="entry name" value="DNAG_N"/>
</dbReference>
<dbReference type="InterPro" id="IPR050219">
    <property type="entry name" value="DnaG_primase"/>
</dbReference>
<dbReference type="InterPro" id="IPR034151">
    <property type="entry name" value="TOPRIM_DnaG_bac"/>
</dbReference>
<dbReference type="InterPro" id="IPR006171">
    <property type="entry name" value="TOPRIM_dom"/>
</dbReference>
<dbReference type="InterPro" id="IPR002694">
    <property type="entry name" value="Znf_CHC2"/>
</dbReference>
<dbReference type="NCBIfam" id="TIGR01391">
    <property type="entry name" value="dnaG"/>
    <property type="match status" value="1"/>
</dbReference>
<dbReference type="PANTHER" id="PTHR30313">
    <property type="entry name" value="DNA PRIMASE"/>
    <property type="match status" value="1"/>
</dbReference>
<dbReference type="PANTHER" id="PTHR30313:SF2">
    <property type="entry name" value="DNA PRIMASE"/>
    <property type="match status" value="1"/>
</dbReference>
<dbReference type="Pfam" id="PF10410">
    <property type="entry name" value="DnaB_bind"/>
    <property type="match status" value="1"/>
</dbReference>
<dbReference type="Pfam" id="PF08278">
    <property type="entry name" value="DnaG_DnaB_bind"/>
    <property type="match status" value="1"/>
</dbReference>
<dbReference type="Pfam" id="PF08275">
    <property type="entry name" value="DNAG_N"/>
    <property type="match status" value="1"/>
</dbReference>
<dbReference type="Pfam" id="PF13155">
    <property type="entry name" value="Toprim_2"/>
    <property type="match status" value="1"/>
</dbReference>
<dbReference type="Pfam" id="PF01807">
    <property type="entry name" value="Zn_ribbon_DnaG"/>
    <property type="match status" value="1"/>
</dbReference>
<dbReference type="PIRSF" id="PIRSF002811">
    <property type="entry name" value="DnaG"/>
    <property type="match status" value="1"/>
</dbReference>
<dbReference type="SMART" id="SM00766">
    <property type="entry name" value="DnaG_DnaB_bind"/>
    <property type="match status" value="1"/>
</dbReference>
<dbReference type="SMART" id="SM00493">
    <property type="entry name" value="TOPRIM"/>
    <property type="match status" value="1"/>
</dbReference>
<dbReference type="SMART" id="SM00400">
    <property type="entry name" value="ZnF_CHCC"/>
    <property type="match status" value="1"/>
</dbReference>
<dbReference type="SUPFAM" id="SSF56731">
    <property type="entry name" value="DNA primase core"/>
    <property type="match status" value="1"/>
</dbReference>
<dbReference type="SUPFAM" id="SSF117023">
    <property type="entry name" value="DNA primase DnaG, C-terminal domain"/>
    <property type="match status" value="1"/>
</dbReference>
<dbReference type="SUPFAM" id="SSF57783">
    <property type="entry name" value="Zinc beta-ribbon"/>
    <property type="match status" value="1"/>
</dbReference>
<dbReference type="PROSITE" id="PS50880">
    <property type="entry name" value="TOPRIM"/>
    <property type="match status" value="1"/>
</dbReference>
<comment type="function">
    <text evidence="1">RNA polymerase that catalyzes the synthesis of short RNA molecules used as primers for DNA polymerase during DNA replication.</text>
</comment>
<comment type="catalytic activity">
    <reaction evidence="1">
        <text>ssDNA + n NTP = ssDNA/pppN(pN)n-1 hybrid + (n-1) diphosphate.</text>
        <dbReference type="EC" id="2.7.7.101"/>
    </reaction>
</comment>
<comment type="cofactor">
    <cofactor evidence="1">
        <name>Zn(2+)</name>
        <dbReference type="ChEBI" id="CHEBI:29105"/>
    </cofactor>
    <text evidence="1">Binds 1 zinc ion per monomer.</text>
</comment>
<comment type="cofactor">
    <cofactor evidence="1">
        <name>Mg(2+)</name>
        <dbReference type="ChEBI" id="CHEBI:18420"/>
    </cofactor>
    <text evidence="1">Binds two Mg(2+) per subunit.</text>
</comment>
<comment type="subunit">
    <text evidence="1">Monomer. Interacts with DnaB.</text>
</comment>
<comment type="domain">
    <text evidence="1">Contains an N-terminal zinc-binding domain, a central core domain that contains the primase activity, and a C-terminal DnaB-binding domain.</text>
</comment>
<comment type="similarity">
    <text evidence="1">Belongs to the DnaG primase family.</text>
</comment>
<keyword id="KW-0235">DNA replication</keyword>
<keyword id="KW-0238">DNA-binding</keyword>
<keyword id="KW-0240">DNA-directed RNA polymerase</keyword>
<keyword id="KW-0460">Magnesium</keyword>
<keyword id="KW-0479">Metal-binding</keyword>
<keyword id="KW-0548">Nucleotidyltransferase</keyword>
<keyword id="KW-0639">Primosome</keyword>
<keyword id="KW-1185">Reference proteome</keyword>
<keyword id="KW-0804">Transcription</keyword>
<keyword id="KW-0808">Transferase</keyword>
<keyword id="KW-0862">Zinc</keyword>
<keyword id="KW-0863">Zinc-finger</keyword>
<proteinExistence type="inferred from homology"/>
<sequence length="578" mass="67638">MPSLIPKEFINELIFKTNIIDIINTRLPLKKVGKNYNTHCPFHQEKTPSFTVNFEKQFYFCFGCNTHGNIIDFLMNYEQLTFVESIKELAKIHGLTIPCKNINKEKLFNYEKITNLYLLTKNIADLYHRNIFKTEYAYQYILNRGIDKSMIKYFNLGFSPKNWYDLEKKNKKQCYNQKELQEIGILKTTILGYTYDRFKNRIIFPIRNKNGNIVGFGGRTLNNHIPKYINSPETQIFHKGFQLYGLYEMLKTNPKPKQILIVEGYVDVIALVQFKINYTISTLGTIISNEQIKLLFRTSNTIIFCYDGDVSGQKAAWRTLNISLSHIHDGKNVKFIFLPNNEDPDSIIRKEGHDNFKIRIKKSIDFSKFLLQTLFKKTDLNSISEKSHTSTIAISLIRKIPGKITQTYLFQTLSKKIGILDYHVLINNNINNINTKIYTKKPIKKTTIRIVIALLIQNPWLALTLPSLKHLQNYKIIGLSCFLDLVEKCISMPNSNTGQILEKYRNKNIFKHLANLAKWDHMIHNEKIKDFFLDSLTKICDIILEDRQNKLISQERLNGLNKQEKYELWSINKELAKK</sequence>
<reference key="1">
    <citation type="journal article" date="2003" name="Proc. Natl. Acad. Sci. U.S.A.">
        <title>Reductive genome evolution in Buchnera aphidicola.</title>
        <authorList>
            <person name="van Ham R.C.H.J."/>
            <person name="Kamerbeek J."/>
            <person name="Palacios C."/>
            <person name="Rausell C."/>
            <person name="Abascal F."/>
            <person name="Bastolla U."/>
            <person name="Fernandez J.M."/>
            <person name="Jimenez L."/>
            <person name="Postigo M."/>
            <person name="Silva F.J."/>
            <person name="Tamames J."/>
            <person name="Viguera E."/>
            <person name="Latorre A."/>
            <person name="Valencia A."/>
            <person name="Moran F."/>
            <person name="Moya A."/>
        </authorList>
    </citation>
    <scope>NUCLEOTIDE SEQUENCE [LARGE SCALE GENOMIC DNA]</scope>
    <source>
        <strain>Bp</strain>
    </source>
</reference>
<name>DNAG_BUCBP</name>
<feature type="chain" id="PRO_0000180483" description="DNA primase">
    <location>
        <begin position="1"/>
        <end position="578"/>
    </location>
</feature>
<feature type="domain" description="Toprim" evidence="1">
    <location>
        <begin position="257"/>
        <end position="339"/>
    </location>
</feature>
<feature type="zinc finger region" description="CHC2-type" evidence="1">
    <location>
        <begin position="40"/>
        <end position="64"/>
    </location>
</feature>
<feature type="binding site" evidence="1">
    <location>
        <position position="263"/>
    </location>
    <ligand>
        <name>Mg(2+)</name>
        <dbReference type="ChEBI" id="CHEBI:18420"/>
        <label>1</label>
        <note>catalytic</note>
    </ligand>
</feature>
<feature type="binding site" evidence="1">
    <location>
        <position position="307"/>
    </location>
    <ligand>
        <name>Mg(2+)</name>
        <dbReference type="ChEBI" id="CHEBI:18420"/>
        <label>1</label>
        <note>catalytic</note>
    </ligand>
</feature>
<feature type="binding site" evidence="1">
    <location>
        <position position="307"/>
    </location>
    <ligand>
        <name>Mg(2+)</name>
        <dbReference type="ChEBI" id="CHEBI:18420"/>
        <label>2</label>
    </ligand>
</feature>
<feature type="binding site" evidence="1">
    <location>
        <position position="309"/>
    </location>
    <ligand>
        <name>Mg(2+)</name>
        <dbReference type="ChEBI" id="CHEBI:18420"/>
        <label>2</label>
    </ligand>
</feature>
<evidence type="ECO:0000255" key="1">
    <source>
        <dbReference type="HAMAP-Rule" id="MF_00974"/>
    </source>
</evidence>
<protein>
    <recommendedName>
        <fullName evidence="1">DNA primase</fullName>
        <ecNumber evidence="1">2.7.7.101</ecNumber>
    </recommendedName>
</protein>